<evidence type="ECO:0000255" key="1">
    <source>
        <dbReference type="HAMAP-Rule" id="MF_00040"/>
    </source>
</evidence>
<accession>A7HY16</accession>
<comment type="function">
    <text evidence="1">Responsible for the release of ribosomes from messenger RNA at the termination of protein biosynthesis. May increase the efficiency of translation by recycling ribosomes from one round of translation to another.</text>
</comment>
<comment type="subcellular location">
    <subcellularLocation>
        <location evidence="1">Cytoplasm</location>
    </subcellularLocation>
</comment>
<comment type="similarity">
    <text evidence="1">Belongs to the RRF family.</text>
</comment>
<gene>
    <name evidence="1" type="primary">frr</name>
    <name type="ordered locus">Plav_3193</name>
</gene>
<reference key="1">
    <citation type="journal article" date="2011" name="Stand. Genomic Sci.">
        <title>Complete genome sequence of Parvibaculum lavamentivorans type strain (DS-1(T)).</title>
        <authorList>
            <person name="Schleheck D."/>
            <person name="Weiss M."/>
            <person name="Pitluck S."/>
            <person name="Bruce D."/>
            <person name="Land M.L."/>
            <person name="Han S."/>
            <person name="Saunders E."/>
            <person name="Tapia R."/>
            <person name="Detter C."/>
            <person name="Brettin T."/>
            <person name="Han J."/>
            <person name="Woyke T."/>
            <person name="Goodwin L."/>
            <person name="Pennacchio L."/>
            <person name="Nolan M."/>
            <person name="Cook A.M."/>
            <person name="Kjelleberg S."/>
            <person name="Thomas T."/>
        </authorList>
    </citation>
    <scope>NUCLEOTIDE SEQUENCE [LARGE SCALE GENOMIC DNA]</scope>
    <source>
        <strain>DS-1 / DSM 13023 / NCIMB 13966</strain>
    </source>
</reference>
<sequence length="187" mass="20923">MADTTFDIDDTERRMRGALQSLKQEFAGLRTGRATASLLEPIVVEAYGQSMPINQVGTIGVPEPRMLTVQVWDKGMISAVEKAIRSSGLGLNPNVDGMLIRLPIPELNQERRAELTKIAAKYTEQARIAVRNVRRDAMDELKRLEKDSHMSQDDHKSWSEKVQKLTDKVIGEIDAALAHKEADIMQV</sequence>
<keyword id="KW-0963">Cytoplasm</keyword>
<keyword id="KW-0648">Protein biosynthesis</keyword>
<keyword id="KW-1185">Reference proteome</keyword>
<proteinExistence type="inferred from homology"/>
<name>RRF_PARL1</name>
<feature type="chain" id="PRO_0000341028" description="Ribosome-recycling factor">
    <location>
        <begin position="1"/>
        <end position="187"/>
    </location>
</feature>
<organism>
    <name type="scientific">Parvibaculum lavamentivorans (strain DS-1 / DSM 13023 / NCIMB 13966)</name>
    <dbReference type="NCBI Taxonomy" id="402881"/>
    <lineage>
        <taxon>Bacteria</taxon>
        <taxon>Pseudomonadati</taxon>
        <taxon>Pseudomonadota</taxon>
        <taxon>Alphaproteobacteria</taxon>
        <taxon>Hyphomicrobiales</taxon>
        <taxon>Parvibaculaceae</taxon>
        <taxon>Parvibaculum</taxon>
    </lineage>
</organism>
<protein>
    <recommendedName>
        <fullName evidence="1">Ribosome-recycling factor</fullName>
        <shortName evidence="1">RRF</shortName>
    </recommendedName>
    <alternativeName>
        <fullName evidence="1">Ribosome-releasing factor</fullName>
    </alternativeName>
</protein>
<dbReference type="EMBL" id="CP000774">
    <property type="protein sequence ID" value="ABS64799.1"/>
    <property type="molecule type" value="Genomic_DNA"/>
</dbReference>
<dbReference type="RefSeq" id="WP_012112125.1">
    <property type="nucleotide sequence ID" value="NC_009719.1"/>
</dbReference>
<dbReference type="SMR" id="A7HY16"/>
<dbReference type="STRING" id="402881.Plav_3193"/>
<dbReference type="KEGG" id="pla:Plav_3193"/>
<dbReference type="eggNOG" id="COG0233">
    <property type="taxonomic scope" value="Bacteria"/>
</dbReference>
<dbReference type="HOGENOM" id="CLU_073981_2_0_5"/>
<dbReference type="OrthoDB" id="9804006at2"/>
<dbReference type="Proteomes" id="UP000006377">
    <property type="component" value="Chromosome"/>
</dbReference>
<dbReference type="GO" id="GO:0005829">
    <property type="term" value="C:cytosol"/>
    <property type="evidence" value="ECO:0007669"/>
    <property type="project" value="GOC"/>
</dbReference>
<dbReference type="GO" id="GO:0043023">
    <property type="term" value="F:ribosomal large subunit binding"/>
    <property type="evidence" value="ECO:0007669"/>
    <property type="project" value="TreeGrafter"/>
</dbReference>
<dbReference type="GO" id="GO:0002184">
    <property type="term" value="P:cytoplasmic translational termination"/>
    <property type="evidence" value="ECO:0007669"/>
    <property type="project" value="TreeGrafter"/>
</dbReference>
<dbReference type="CDD" id="cd00520">
    <property type="entry name" value="RRF"/>
    <property type="match status" value="1"/>
</dbReference>
<dbReference type="FunFam" id="1.10.132.20:FF:000001">
    <property type="entry name" value="Ribosome-recycling factor"/>
    <property type="match status" value="1"/>
</dbReference>
<dbReference type="FunFam" id="3.30.1360.40:FF:000001">
    <property type="entry name" value="Ribosome-recycling factor"/>
    <property type="match status" value="1"/>
</dbReference>
<dbReference type="Gene3D" id="3.30.1360.40">
    <property type="match status" value="1"/>
</dbReference>
<dbReference type="Gene3D" id="1.10.132.20">
    <property type="entry name" value="Ribosome-recycling factor"/>
    <property type="match status" value="1"/>
</dbReference>
<dbReference type="HAMAP" id="MF_00040">
    <property type="entry name" value="RRF"/>
    <property type="match status" value="1"/>
</dbReference>
<dbReference type="InterPro" id="IPR002661">
    <property type="entry name" value="Ribosome_recyc_fac"/>
</dbReference>
<dbReference type="InterPro" id="IPR023584">
    <property type="entry name" value="Ribosome_recyc_fac_dom"/>
</dbReference>
<dbReference type="InterPro" id="IPR036191">
    <property type="entry name" value="RRF_sf"/>
</dbReference>
<dbReference type="NCBIfam" id="TIGR00496">
    <property type="entry name" value="frr"/>
    <property type="match status" value="1"/>
</dbReference>
<dbReference type="PANTHER" id="PTHR20982:SF3">
    <property type="entry name" value="MITOCHONDRIAL RIBOSOME RECYCLING FACTOR PSEUDO 1"/>
    <property type="match status" value="1"/>
</dbReference>
<dbReference type="PANTHER" id="PTHR20982">
    <property type="entry name" value="RIBOSOME RECYCLING FACTOR"/>
    <property type="match status" value="1"/>
</dbReference>
<dbReference type="Pfam" id="PF01765">
    <property type="entry name" value="RRF"/>
    <property type="match status" value="1"/>
</dbReference>
<dbReference type="SUPFAM" id="SSF55194">
    <property type="entry name" value="Ribosome recycling factor, RRF"/>
    <property type="match status" value="1"/>
</dbReference>